<evidence type="ECO:0000255" key="1">
    <source>
        <dbReference type="HAMAP-Rule" id="MF_00247"/>
    </source>
</evidence>
<keyword id="KW-0963">Cytoplasm</keyword>
<keyword id="KW-0274">FAD</keyword>
<keyword id="KW-0285">Flavoprotein</keyword>
<keyword id="KW-0520">NAD</keyword>
<keyword id="KW-0521">NADP</keyword>
<keyword id="KW-0560">Oxidoreductase</keyword>
<keyword id="KW-1185">Reference proteome</keyword>
<feature type="chain" id="PRO_1000100855" description="Soluble pyridine nucleotide transhydrogenase">
    <location>
        <begin position="1"/>
        <end position="466"/>
    </location>
</feature>
<feature type="binding site" evidence="1">
    <location>
        <begin position="36"/>
        <end position="45"/>
    </location>
    <ligand>
        <name>FAD</name>
        <dbReference type="ChEBI" id="CHEBI:57692"/>
    </ligand>
</feature>
<reference key="1">
    <citation type="journal article" date="2008" name="Environ. Microbiol.">
        <title>The genome of Erwinia tasmaniensis strain Et1/99, a non-pathogenic bacterium in the genus Erwinia.</title>
        <authorList>
            <person name="Kube M."/>
            <person name="Migdoll A.M."/>
            <person name="Mueller I."/>
            <person name="Kuhl H."/>
            <person name="Beck A."/>
            <person name="Reinhardt R."/>
            <person name="Geider K."/>
        </authorList>
    </citation>
    <scope>NUCLEOTIDE SEQUENCE [LARGE SCALE GENOMIC DNA]</scope>
    <source>
        <strain>DSM 17950 / CFBP 7177 / CIP 109463 / NCPPB 4357 / Et1/99</strain>
    </source>
</reference>
<dbReference type="EC" id="1.6.1.1" evidence="1"/>
<dbReference type="EMBL" id="CU468135">
    <property type="protein sequence ID" value="CAO95186.1"/>
    <property type="molecule type" value="Genomic_DNA"/>
</dbReference>
<dbReference type="RefSeq" id="WP_012439910.1">
    <property type="nucleotide sequence ID" value="NC_010694.1"/>
</dbReference>
<dbReference type="SMR" id="B2VGA0"/>
<dbReference type="STRING" id="465817.ETA_01400"/>
<dbReference type="KEGG" id="eta:ETA_01400"/>
<dbReference type="eggNOG" id="COG1249">
    <property type="taxonomic scope" value="Bacteria"/>
</dbReference>
<dbReference type="HOGENOM" id="CLU_016755_0_0_6"/>
<dbReference type="OrthoDB" id="9800167at2"/>
<dbReference type="Proteomes" id="UP000001726">
    <property type="component" value="Chromosome"/>
</dbReference>
<dbReference type="GO" id="GO:0005829">
    <property type="term" value="C:cytosol"/>
    <property type="evidence" value="ECO:0007669"/>
    <property type="project" value="TreeGrafter"/>
</dbReference>
<dbReference type="GO" id="GO:0004148">
    <property type="term" value="F:dihydrolipoyl dehydrogenase (NADH) activity"/>
    <property type="evidence" value="ECO:0007669"/>
    <property type="project" value="TreeGrafter"/>
</dbReference>
<dbReference type="GO" id="GO:0050660">
    <property type="term" value="F:flavin adenine dinucleotide binding"/>
    <property type="evidence" value="ECO:0007669"/>
    <property type="project" value="TreeGrafter"/>
</dbReference>
<dbReference type="GO" id="GO:0003957">
    <property type="term" value="F:NAD(P)+ transhydrogenase (Si-specific) activity"/>
    <property type="evidence" value="ECO:0007669"/>
    <property type="project" value="UniProtKB-UniRule"/>
</dbReference>
<dbReference type="GO" id="GO:0006103">
    <property type="term" value="P:2-oxoglutarate metabolic process"/>
    <property type="evidence" value="ECO:0007669"/>
    <property type="project" value="TreeGrafter"/>
</dbReference>
<dbReference type="GO" id="GO:0006739">
    <property type="term" value="P:NADP metabolic process"/>
    <property type="evidence" value="ECO:0007669"/>
    <property type="project" value="UniProtKB-UniRule"/>
</dbReference>
<dbReference type="FunFam" id="3.30.390.30:FF:000002">
    <property type="entry name" value="Soluble pyridine nucleotide transhydrogenase"/>
    <property type="match status" value="1"/>
</dbReference>
<dbReference type="FunFam" id="3.50.50.60:FF:000008">
    <property type="entry name" value="Soluble pyridine nucleotide transhydrogenase"/>
    <property type="match status" value="1"/>
</dbReference>
<dbReference type="Gene3D" id="3.30.390.30">
    <property type="match status" value="1"/>
</dbReference>
<dbReference type="Gene3D" id="3.50.50.60">
    <property type="entry name" value="FAD/NAD(P)-binding domain"/>
    <property type="match status" value="2"/>
</dbReference>
<dbReference type="HAMAP" id="MF_00247">
    <property type="entry name" value="SthA"/>
    <property type="match status" value="1"/>
</dbReference>
<dbReference type="InterPro" id="IPR050151">
    <property type="entry name" value="Class-I_Pyr_Nuc-Dis_Oxidored"/>
</dbReference>
<dbReference type="InterPro" id="IPR036188">
    <property type="entry name" value="FAD/NAD-bd_sf"/>
</dbReference>
<dbReference type="InterPro" id="IPR023753">
    <property type="entry name" value="FAD/NAD-binding_dom"/>
</dbReference>
<dbReference type="InterPro" id="IPR016156">
    <property type="entry name" value="FAD/NAD-linked_Rdtase_dimer_sf"/>
</dbReference>
<dbReference type="InterPro" id="IPR001100">
    <property type="entry name" value="Pyr_nuc-diS_OxRdtase"/>
</dbReference>
<dbReference type="InterPro" id="IPR004099">
    <property type="entry name" value="Pyr_nucl-diS_OxRdtase_dimer"/>
</dbReference>
<dbReference type="InterPro" id="IPR022962">
    <property type="entry name" value="STH_gammaproteobact"/>
</dbReference>
<dbReference type="NCBIfam" id="NF003585">
    <property type="entry name" value="PRK05249.1"/>
    <property type="match status" value="1"/>
</dbReference>
<dbReference type="PANTHER" id="PTHR22912">
    <property type="entry name" value="DISULFIDE OXIDOREDUCTASE"/>
    <property type="match status" value="1"/>
</dbReference>
<dbReference type="PANTHER" id="PTHR22912:SF93">
    <property type="entry name" value="SOLUBLE PYRIDINE NUCLEOTIDE TRANSHYDROGENASE"/>
    <property type="match status" value="1"/>
</dbReference>
<dbReference type="Pfam" id="PF07992">
    <property type="entry name" value="Pyr_redox_2"/>
    <property type="match status" value="1"/>
</dbReference>
<dbReference type="Pfam" id="PF02852">
    <property type="entry name" value="Pyr_redox_dim"/>
    <property type="match status" value="1"/>
</dbReference>
<dbReference type="PIRSF" id="PIRSF000350">
    <property type="entry name" value="Mercury_reductase_MerA"/>
    <property type="match status" value="1"/>
</dbReference>
<dbReference type="PRINTS" id="PR00368">
    <property type="entry name" value="FADPNR"/>
</dbReference>
<dbReference type="PRINTS" id="PR00411">
    <property type="entry name" value="PNDRDTASEI"/>
</dbReference>
<dbReference type="SUPFAM" id="SSF51905">
    <property type="entry name" value="FAD/NAD(P)-binding domain"/>
    <property type="match status" value="1"/>
</dbReference>
<dbReference type="SUPFAM" id="SSF55424">
    <property type="entry name" value="FAD/NAD-linked reductases, dimerisation (C-terminal) domain"/>
    <property type="match status" value="1"/>
</dbReference>
<proteinExistence type="inferred from homology"/>
<protein>
    <recommendedName>
        <fullName evidence="1">Soluble pyridine nucleotide transhydrogenase</fullName>
        <shortName evidence="1">STH</shortName>
        <ecNumber evidence="1">1.6.1.1</ecNumber>
    </recommendedName>
    <alternativeName>
        <fullName evidence="1">NAD(P)(+) transhydrogenase [B-specific]</fullName>
    </alternativeName>
</protein>
<sequence>MQKSYDYDAIVIGSGPGGEGAAMGLVKQGARIAVIERYHNIGGGCTHWGTIPSKALRHAVSRIIEFNQNPLYSDHTRLLRSSFADILNHTENVVSQQTHMRQGFYERNHCEIFQGDARFIDANTLEIETHDGSIERLTAEKFVIACGSRPYHPPDVDFTHPRIYDSDSILNLHHEPGHVIIYGAGVIGCEYASIFRGLAVKVDLINTRDRLLAFLDQEMSDSLSYHFWNNGVVIRHNEEFEKVEGVADGVIMHLKSGKKLKADCLLYANGRTGNTDSLSLENVGLEADGRGLLKVNSMYQTAQPNIYAVGDVIGYPSLASAAYDQGRIAAQAMIKGEATAHLIEDIPTGIYTIPEISSVGKTEQQLTAMKVPYEVGRAQFKHLARAQIVGMNVGSLKILFHRETKEILGIHCFGERAAEIIHIGQAIMEQKNGGNTIEYFVNTTFNYPTMAEAYRVAALNGLNRLF</sequence>
<organism>
    <name type="scientific">Erwinia tasmaniensis (strain DSM 17950 / CFBP 7177 / CIP 109463 / NCPPB 4357 / Et1/99)</name>
    <dbReference type="NCBI Taxonomy" id="465817"/>
    <lineage>
        <taxon>Bacteria</taxon>
        <taxon>Pseudomonadati</taxon>
        <taxon>Pseudomonadota</taxon>
        <taxon>Gammaproteobacteria</taxon>
        <taxon>Enterobacterales</taxon>
        <taxon>Erwiniaceae</taxon>
        <taxon>Erwinia</taxon>
    </lineage>
</organism>
<name>STHA_ERWT9</name>
<gene>
    <name evidence="1" type="primary">sthA</name>
    <name evidence="1" type="synonym">udhA</name>
    <name type="ordered locus">ETA_01400</name>
</gene>
<accession>B2VGA0</accession>
<comment type="function">
    <text evidence="1">Conversion of NADPH, generated by peripheral catabolic pathways, to NADH, which can enter the respiratory chain for energy generation.</text>
</comment>
<comment type="catalytic activity">
    <reaction evidence="1">
        <text>NAD(+) + NADPH = NADH + NADP(+)</text>
        <dbReference type="Rhea" id="RHEA:11692"/>
        <dbReference type="ChEBI" id="CHEBI:57540"/>
        <dbReference type="ChEBI" id="CHEBI:57783"/>
        <dbReference type="ChEBI" id="CHEBI:57945"/>
        <dbReference type="ChEBI" id="CHEBI:58349"/>
        <dbReference type="EC" id="1.6.1.1"/>
    </reaction>
</comment>
<comment type="cofactor">
    <cofactor evidence="1">
        <name>FAD</name>
        <dbReference type="ChEBI" id="CHEBI:57692"/>
    </cofactor>
    <text evidence="1">Binds 1 FAD per subunit.</text>
</comment>
<comment type="subcellular location">
    <subcellularLocation>
        <location evidence="1">Cytoplasm</location>
    </subcellularLocation>
</comment>
<comment type="similarity">
    <text evidence="1">Belongs to the class-I pyridine nucleotide-disulfide oxidoreductase family.</text>
</comment>